<dbReference type="EMBL" id="CP001612">
    <property type="protein sequence ID" value="ACP53377.1"/>
    <property type="molecule type" value="Genomic_DNA"/>
</dbReference>
<dbReference type="RefSeq" id="WP_012719609.1">
    <property type="nucleotide sequence ID" value="NC_012633.1"/>
</dbReference>
<dbReference type="KEGG" id="raf:RAF_ORF0447"/>
<dbReference type="HOGENOM" id="CLU_144811_5_2_5"/>
<dbReference type="Proteomes" id="UP000002305">
    <property type="component" value="Chromosome"/>
</dbReference>
<dbReference type="GO" id="GO:0005886">
    <property type="term" value="C:plasma membrane"/>
    <property type="evidence" value="ECO:0007669"/>
    <property type="project" value="UniProtKB-SubCell"/>
</dbReference>
<dbReference type="HAMAP" id="MF_00386">
    <property type="entry name" value="UPF0161_YidD"/>
    <property type="match status" value="1"/>
</dbReference>
<dbReference type="InterPro" id="IPR002696">
    <property type="entry name" value="Membr_insert_effic_factor_YidD"/>
</dbReference>
<dbReference type="NCBIfam" id="TIGR00278">
    <property type="entry name" value="membrane protein insertion efficiency factor YidD"/>
    <property type="match status" value="1"/>
</dbReference>
<dbReference type="PANTHER" id="PTHR33383">
    <property type="entry name" value="MEMBRANE PROTEIN INSERTION EFFICIENCY FACTOR-RELATED"/>
    <property type="match status" value="1"/>
</dbReference>
<dbReference type="PANTHER" id="PTHR33383:SF1">
    <property type="entry name" value="MEMBRANE PROTEIN INSERTION EFFICIENCY FACTOR-RELATED"/>
    <property type="match status" value="1"/>
</dbReference>
<dbReference type="Pfam" id="PF01809">
    <property type="entry name" value="YidD"/>
    <property type="match status" value="1"/>
</dbReference>
<dbReference type="SMART" id="SM01234">
    <property type="entry name" value="Haemolytic"/>
    <property type="match status" value="1"/>
</dbReference>
<comment type="function">
    <text evidence="1">Could be involved in insertion of integral membrane proteins into the membrane.</text>
</comment>
<comment type="subcellular location">
    <subcellularLocation>
        <location evidence="1">Cell inner membrane</location>
        <topology evidence="1">Peripheral membrane protein</topology>
        <orientation evidence="1">Cytoplasmic side</orientation>
    </subcellularLocation>
</comment>
<comment type="similarity">
    <text evidence="1">Belongs to the UPF0161 family.</text>
</comment>
<keyword id="KW-0997">Cell inner membrane</keyword>
<keyword id="KW-1003">Cell membrane</keyword>
<keyword id="KW-0472">Membrane</keyword>
<organism>
    <name type="scientific">Rickettsia africae (strain ESF-5)</name>
    <dbReference type="NCBI Taxonomy" id="347255"/>
    <lineage>
        <taxon>Bacteria</taxon>
        <taxon>Pseudomonadati</taxon>
        <taxon>Pseudomonadota</taxon>
        <taxon>Alphaproteobacteria</taxon>
        <taxon>Rickettsiales</taxon>
        <taxon>Rickettsiaceae</taxon>
        <taxon>Rickettsieae</taxon>
        <taxon>Rickettsia</taxon>
        <taxon>spotted fever group</taxon>
    </lineage>
</organism>
<gene>
    <name type="ordered locus">RAF_ORF0447</name>
</gene>
<sequence>MTRILLLLLGFYQYFISPLLGNNCRFHPTCSEYAKEAISMHGSIKGLWFTFKRIIKCQPFCNGGYDTVPISIKNSKPLNKKI</sequence>
<name>YIDD_RICAE</name>
<evidence type="ECO:0000255" key="1">
    <source>
        <dbReference type="HAMAP-Rule" id="MF_00386"/>
    </source>
</evidence>
<feature type="chain" id="PRO_1000205789" description="Putative membrane protein insertion efficiency factor">
    <location>
        <begin position="1"/>
        <end position="82"/>
    </location>
</feature>
<accession>C3PN67</accession>
<proteinExistence type="inferred from homology"/>
<protein>
    <recommendedName>
        <fullName evidence="1">Putative membrane protein insertion efficiency factor</fullName>
    </recommendedName>
</protein>
<reference key="1">
    <citation type="journal article" date="2009" name="BMC Genomics">
        <title>Analysis of the Rickettsia africae genome reveals that virulence acquisition in Rickettsia species may be explained by genome reduction.</title>
        <authorList>
            <person name="Fournier P.-E."/>
            <person name="El Karkouri K."/>
            <person name="Leroy Q."/>
            <person name="Robert C."/>
            <person name="Giumelli B."/>
            <person name="Renesto P."/>
            <person name="Socolovschi C."/>
            <person name="Parola P."/>
            <person name="Audic S."/>
            <person name="Raoult D."/>
        </authorList>
    </citation>
    <scope>NUCLEOTIDE SEQUENCE [LARGE SCALE GENOMIC DNA]</scope>
    <source>
        <strain>ESF-5</strain>
    </source>
</reference>